<proteinExistence type="evidence at protein level"/>
<dbReference type="EMBL" id="AF006074">
    <property type="protein sequence ID" value="AAC49745.1"/>
    <property type="molecule type" value="mRNA"/>
</dbReference>
<dbReference type="EMBL" id="Z47815">
    <property type="protein sequence ID" value="CAA87819.1"/>
    <property type="molecule type" value="Genomic_DNA"/>
</dbReference>
<dbReference type="EMBL" id="BK006946">
    <property type="protein sequence ID" value="DAA10096.1"/>
    <property type="molecule type" value="Genomic_DNA"/>
</dbReference>
<dbReference type="PIR" id="S50926">
    <property type="entry name" value="S50926"/>
</dbReference>
<dbReference type="RefSeq" id="NP_013924.1">
    <property type="nucleotide sequence ID" value="NM_001182704.1"/>
</dbReference>
<dbReference type="PDB" id="3ONJ">
    <property type="method" value="X-ray"/>
    <property type="resolution" value="1.92 A"/>
    <property type="chains" value="A=3-99"/>
</dbReference>
<dbReference type="PDB" id="3ONL">
    <property type="method" value="X-ray"/>
    <property type="resolution" value="2.20 A"/>
    <property type="chains" value="C=3-99"/>
</dbReference>
<dbReference type="PDB" id="7XAD">
    <property type="method" value="X-ray"/>
    <property type="resolution" value="3.00 A"/>
    <property type="chains" value="C/E/G/I=2-99"/>
</dbReference>
<dbReference type="PDBsum" id="3ONJ"/>
<dbReference type="PDBsum" id="3ONL"/>
<dbReference type="PDBsum" id="7XAD"/>
<dbReference type="SMR" id="Q04338"/>
<dbReference type="BioGRID" id="35375">
    <property type="interactions" value="710"/>
</dbReference>
<dbReference type="ComplexPortal" id="CPX-1887">
    <property type="entry name" value="Vacuolar SNARE complex VAM3-VTI1-VAM7-YKT6"/>
</dbReference>
<dbReference type="ComplexPortal" id="CPX-5321">
    <property type="entry name" value="Endosomal SNARE complex TLG2-VTI1-TLG1-SNC2"/>
</dbReference>
<dbReference type="ComplexPortal" id="CPX-5322">
    <property type="entry name" value="Endosomal SNARE complex TLG2-VTI1-TLG1-SNC1"/>
</dbReference>
<dbReference type="ComplexPortal" id="CPX-5401">
    <property type="entry name" value="Vacuolar SNARE complex VAM3-VTI1-VAM7-NYV1"/>
</dbReference>
<dbReference type="ComplexPortal" id="CPX-5421">
    <property type="entry name" value="Endosomal SNARE complex PEP12-VTI1-SYN8-YKT6"/>
</dbReference>
<dbReference type="ComplexPortal" id="CPX-5422">
    <property type="entry name" value="Endosomal SNARE complex PEP12-VTI1-TLG1-YKT6"/>
</dbReference>
<dbReference type="ComplexPortal" id="CPX-5423">
    <property type="entry name" value="Endosomal SNARE complex PEP12-VTI1-TLG1-SNC1"/>
</dbReference>
<dbReference type="ComplexPortal" id="CPX-5424">
    <property type="entry name" value="Endosomal SNARE complex PEP12-VTI1-SYN8-SNC1"/>
</dbReference>
<dbReference type="ComplexPortal" id="CPX-5461">
    <property type="entry name" value="Endosomal SNARE complex PEP12-VTI1-SYN8-SNC2"/>
</dbReference>
<dbReference type="ComplexPortal" id="CPX-5462">
    <property type="entry name" value="Endosomal SNARE complex PEP12-VTI1-TLG1-SNC2"/>
</dbReference>
<dbReference type="DIP" id="DIP-2145N"/>
<dbReference type="FunCoup" id="Q04338">
    <property type="interactions" value="1009"/>
</dbReference>
<dbReference type="IntAct" id="Q04338">
    <property type="interactions" value="17"/>
</dbReference>
<dbReference type="MINT" id="Q04338"/>
<dbReference type="STRING" id="4932.YMR197C"/>
<dbReference type="TCDB" id="1.F.1.1.2">
    <property type="family name" value="the synaptosomal vesicle fusion pore (svf-pore) family"/>
</dbReference>
<dbReference type="iPTMnet" id="Q04338"/>
<dbReference type="PaxDb" id="4932-YMR197C"/>
<dbReference type="PeptideAtlas" id="Q04338"/>
<dbReference type="EnsemblFungi" id="YMR197C_mRNA">
    <property type="protein sequence ID" value="YMR197C"/>
    <property type="gene ID" value="YMR197C"/>
</dbReference>
<dbReference type="GeneID" id="855237"/>
<dbReference type="KEGG" id="sce:YMR197C"/>
<dbReference type="AGR" id="SGD:S000004810"/>
<dbReference type="SGD" id="S000004810">
    <property type="gene designation" value="VTI1"/>
</dbReference>
<dbReference type="VEuPathDB" id="FungiDB:YMR197C"/>
<dbReference type="eggNOG" id="KOG1666">
    <property type="taxonomic scope" value="Eukaryota"/>
</dbReference>
<dbReference type="GeneTree" id="ENSGT00950000183192"/>
<dbReference type="HOGENOM" id="CLU_075474_0_0_1"/>
<dbReference type="InParanoid" id="Q04338"/>
<dbReference type="OMA" id="MEYEAND"/>
<dbReference type="OrthoDB" id="430637at2759"/>
<dbReference type="BioCyc" id="YEAST:G3O-32884-MONOMER"/>
<dbReference type="Reactome" id="R-SCE-114608">
    <property type="pathway name" value="Platelet degranulation"/>
</dbReference>
<dbReference type="Reactome" id="R-SCE-6811440">
    <property type="pathway name" value="Retrograde transport at the Trans-Golgi-Network"/>
</dbReference>
<dbReference type="BioGRID-ORCS" id="855237">
    <property type="hits" value="6 hits in 10 CRISPR screens"/>
</dbReference>
<dbReference type="EvolutionaryTrace" id="Q04338"/>
<dbReference type="PRO" id="PR:Q04338"/>
<dbReference type="Proteomes" id="UP000002311">
    <property type="component" value="Chromosome XIII"/>
</dbReference>
<dbReference type="RNAct" id="Q04338">
    <property type="molecule type" value="protein"/>
</dbReference>
<dbReference type="GO" id="GO:0000421">
    <property type="term" value="C:autophagosome membrane"/>
    <property type="evidence" value="ECO:0000269"/>
    <property type="project" value="ComplexPortal"/>
</dbReference>
<dbReference type="GO" id="GO:0005829">
    <property type="term" value="C:cytosol"/>
    <property type="evidence" value="ECO:0007669"/>
    <property type="project" value="GOC"/>
</dbReference>
<dbReference type="GO" id="GO:0005789">
    <property type="term" value="C:endoplasmic reticulum membrane"/>
    <property type="evidence" value="ECO:0000318"/>
    <property type="project" value="GO_Central"/>
</dbReference>
<dbReference type="GO" id="GO:0010008">
    <property type="term" value="C:endosome membrane"/>
    <property type="evidence" value="ECO:0000303"/>
    <property type="project" value="ComplexPortal"/>
</dbReference>
<dbReference type="GO" id="GO:0012507">
    <property type="term" value="C:ER to Golgi transport vesicle membrane"/>
    <property type="evidence" value="ECO:0000318"/>
    <property type="project" value="GO_Central"/>
</dbReference>
<dbReference type="GO" id="GO:0000329">
    <property type="term" value="C:fungal-type vacuole membrane"/>
    <property type="evidence" value="ECO:0007005"/>
    <property type="project" value="SGD"/>
</dbReference>
<dbReference type="GO" id="GO:0005794">
    <property type="term" value="C:Golgi apparatus"/>
    <property type="evidence" value="ECO:0000318"/>
    <property type="project" value="GO_Central"/>
</dbReference>
<dbReference type="GO" id="GO:0000139">
    <property type="term" value="C:Golgi membrane"/>
    <property type="evidence" value="ECO:0000314"/>
    <property type="project" value="SGD"/>
</dbReference>
<dbReference type="GO" id="GO:0031902">
    <property type="term" value="C:late endosome membrane"/>
    <property type="evidence" value="ECO:0000318"/>
    <property type="project" value="GO_Central"/>
</dbReference>
<dbReference type="GO" id="GO:0031201">
    <property type="term" value="C:SNARE complex"/>
    <property type="evidence" value="ECO:0000353"/>
    <property type="project" value="SGD"/>
</dbReference>
<dbReference type="GO" id="GO:0005774">
    <property type="term" value="C:vacuolar membrane"/>
    <property type="evidence" value="ECO:0000314"/>
    <property type="project" value="ComplexPortal"/>
</dbReference>
<dbReference type="GO" id="GO:0005484">
    <property type="term" value="F:SNAP receptor activity"/>
    <property type="evidence" value="ECO:0000314"/>
    <property type="project" value="SGD"/>
</dbReference>
<dbReference type="GO" id="GO:0000149">
    <property type="term" value="F:SNARE binding"/>
    <property type="evidence" value="ECO:0000318"/>
    <property type="project" value="GO_Central"/>
</dbReference>
<dbReference type="GO" id="GO:0061911">
    <property type="term" value="P:amphisome-lysosome fusion"/>
    <property type="evidence" value="ECO:0000303"/>
    <property type="project" value="ComplexPortal"/>
</dbReference>
<dbReference type="GO" id="GO:0006897">
    <property type="term" value="P:endocytosis"/>
    <property type="evidence" value="ECO:0000303"/>
    <property type="project" value="ComplexPortal"/>
</dbReference>
<dbReference type="GO" id="GO:0006895">
    <property type="term" value="P:Golgi to endosome transport"/>
    <property type="evidence" value="ECO:0000303"/>
    <property type="project" value="ComplexPortal"/>
</dbReference>
<dbReference type="GO" id="GO:0006896">
    <property type="term" value="P:Golgi to vacuole transport"/>
    <property type="evidence" value="ECO:0000315"/>
    <property type="project" value="SGD"/>
</dbReference>
<dbReference type="GO" id="GO:0048210">
    <property type="term" value="P:Golgi vesicle fusion to target membrane"/>
    <property type="evidence" value="ECO:0000303"/>
    <property type="project" value="ComplexPortal"/>
</dbReference>
<dbReference type="GO" id="GO:0006891">
    <property type="term" value="P:intra-Golgi vesicle-mediated transport"/>
    <property type="evidence" value="ECO:0000315"/>
    <property type="project" value="SGD"/>
</dbReference>
<dbReference type="GO" id="GO:0006886">
    <property type="term" value="P:intracellular protein transport"/>
    <property type="evidence" value="ECO:0000303"/>
    <property type="project" value="ComplexPortal"/>
</dbReference>
<dbReference type="GO" id="GO:0016236">
    <property type="term" value="P:macroautophagy"/>
    <property type="evidence" value="ECO:0000315"/>
    <property type="project" value="SGD"/>
</dbReference>
<dbReference type="GO" id="GO:0042147">
    <property type="term" value="P:retrograde transport, endosome to Golgi"/>
    <property type="evidence" value="ECO:0000318"/>
    <property type="project" value="GO_Central"/>
</dbReference>
<dbReference type="GO" id="GO:0007036">
    <property type="term" value="P:vacuolar calcium ion homeostasis"/>
    <property type="evidence" value="ECO:0000314"/>
    <property type="project" value="ComplexPortal"/>
</dbReference>
<dbReference type="GO" id="GO:0042144">
    <property type="term" value="P:vacuole fusion, non-autophagic"/>
    <property type="evidence" value="ECO:0000314"/>
    <property type="project" value="ComplexPortal"/>
</dbReference>
<dbReference type="GO" id="GO:0006906">
    <property type="term" value="P:vesicle fusion"/>
    <property type="evidence" value="ECO:0000314"/>
    <property type="project" value="ComplexPortal"/>
</dbReference>
<dbReference type="GO" id="GO:0048280">
    <property type="term" value="P:vesicle fusion with Golgi apparatus"/>
    <property type="evidence" value="ECO:0000318"/>
    <property type="project" value="GO_Central"/>
</dbReference>
<dbReference type="CDD" id="cd15862">
    <property type="entry name" value="SNARE_Vti1"/>
    <property type="match status" value="1"/>
</dbReference>
<dbReference type="FunFam" id="1.20.58.400:FF:000006">
    <property type="entry name" value="t-SNARE VTI1"/>
    <property type="match status" value="1"/>
</dbReference>
<dbReference type="FunFam" id="1.20.5.110:FF:000002">
    <property type="entry name" value="Vesicle transport through interaction with t-SNAREsB"/>
    <property type="match status" value="1"/>
</dbReference>
<dbReference type="Gene3D" id="1.20.5.110">
    <property type="match status" value="1"/>
</dbReference>
<dbReference type="Gene3D" id="1.20.58.400">
    <property type="entry name" value="t-snare proteins"/>
    <property type="match status" value="1"/>
</dbReference>
<dbReference type="InterPro" id="IPR027027">
    <property type="entry name" value="GOSR2/Membrin/Bos1"/>
</dbReference>
<dbReference type="InterPro" id="IPR010989">
    <property type="entry name" value="SNARE"/>
</dbReference>
<dbReference type="InterPro" id="IPR000727">
    <property type="entry name" value="T_SNARE_dom"/>
</dbReference>
<dbReference type="InterPro" id="IPR038407">
    <property type="entry name" value="v-SNARE_N_sf"/>
</dbReference>
<dbReference type="InterPro" id="IPR007705">
    <property type="entry name" value="Vesicle_trsprt_v-SNARE_N"/>
</dbReference>
<dbReference type="PANTHER" id="PTHR21230:SF26">
    <property type="entry name" value="VESICLE TRANSPORT THROUGH INTERACTION WITH T-SNARES HOMOLOG 1A"/>
    <property type="match status" value="1"/>
</dbReference>
<dbReference type="PANTHER" id="PTHR21230">
    <property type="entry name" value="VESICLE TRANSPORT V-SNARE PROTEIN VTI1-RELATED"/>
    <property type="match status" value="1"/>
</dbReference>
<dbReference type="Pfam" id="PF05008">
    <property type="entry name" value="V-SNARE"/>
    <property type="match status" value="1"/>
</dbReference>
<dbReference type="Pfam" id="PF12352">
    <property type="entry name" value="V-SNARE_C"/>
    <property type="match status" value="1"/>
</dbReference>
<dbReference type="PIRSF" id="PIRSF028865">
    <property type="entry name" value="Membrin-2"/>
    <property type="match status" value="1"/>
</dbReference>
<dbReference type="SMART" id="SM00397">
    <property type="entry name" value="t_SNARE"/>
    <property type="match status" value="1"/>
</dbReference>
<dbReference type="SUPFAM" id="SSF58038">
    <property type="entry name" value="SNARE fusion complex"/>
    <property type="match status" value="1"/>
</dbReference>
<dbReference type="SUPFAM" id="SSF47661">
    <property type="entry name" value="t-snare proteins"/>
    <property type="match status" value="1"/>
</dbReference>
<dbReference type="PROSITE" id="PS50192">
    <property type="entry name" value="T_SNARE"/>
    <property type="match status" value="1"/>
</dbReference>
<evidence type="ECO:0000255" key="1"/>
<evidence type="ECO:0000255" key="2">
    <source>
        <dbReference type="PROSITE-ProRule" id="PRU00202"/>
    </source>
</evidence>
<evidence type="ECO:0000269" key="3">
    <source>
    </source>
</evidence>
<evidence type="ECO:0000269" key="4">
    <source>
    </source>
</evidence>
<evidence type="ECO:0000269" key="5">
    <source>
    </source>
</evidence>
<evidence type="ECO:0000269" key="6">
    <source>
    </source>
</evidence>
<evidence type="ECO:0000269" key="7">
    <source ref="4"/>
</evidence>
<evidence type="ECO:0000305" key="8"/>
<evidence type="ECO:0007744" key="9">
    <source>
    </source>
</evidence>
<evidence type="ECO:0007744" key="10">
    <source>
    </source>
</evidence>
<evidence type="ECO:0007829" key="11">
    <source>
        <dbReference type="PDB" id="3ONJ"/>
    </source>
</evidence>
<name>VTI1_YEAST</name>
<comment type="function">
    <text evidence="3 4 5">t-SNARE found in various SNARE complexes involved in multiple transport pathways. The composition of the t-SNARE complexes is specific for a limited number of v-SNAREs and therefore allows only the vesicles carrying the matching v-SNARE to fuse.</text>
</comment>
<comment type="subunit">
    <text evidence="3">Forms SNARE complexes with the t-SNAREs VAM3 and VAM7, and the v-SNAREs NYV1 and YKT6 on vacuolar membranes, which are involved in biosynthetic transport pathways to the vacuole and in homotypic vacuole fusion. Forms SNARE complexes with the cis-Golgi t-SNARE SED5 and the v-SNAREs SFT1 and YTK6, which are involved in retrograde traffic to the cis-Golgi compartment. Forms SNARE complexes with the t-SNAREs TLG1 and TLG2, and either the v-SNARE SNC1 or SNC2, which are involved in traffic from early endosomes to the trans-Golgi network (TGN). Forms SNARE complexes with the t-SNAREs PEP12 and either SYN8 or TLG1, and the v-SNARE SNC1, which are involved in traffic from the TGN to the prevacuolar compartment (PVC).</text>
</comment>
<comment type="interaction">
    <interactant intactId="EBI-20519">
        <id>Q04338</id>
    </interactant>
    <interactant intactId="EBI-25662">
        <id>P47160</id>
        <label>ENT3</label>
    </interactant>
    <organismsDiffer>false</organismsDiffer>
    <experiments>7</experiments>
</comment>
<comment type="interaction">
    <interactant intactId="EBI-20519">
        <id>Q04338</id>
    </interactant>
    <interactant intactId="EBI-35465">
        <id>Q12255</id>
        <label>NYV1</label>
    </interactant>
    <organismsDiffer>false</organismsDiffer>
    <experiments>11</experiments>
</comment>
<comment type="interaction">
    <interactant intactId="EBI-20519">
        <id>Q04338</id>
    </interactant>
    <interactant intactId="EBI-13123">
        <id>P32319</id>
        <label>PEP1</label>
    </interactant>
    <organismsDiffer>false</organismsDiffer>
    <experiments>2</experiments>
</comment>
<comment type="interaction">
    <interactant intactId="EBI-20519">
        <id>Q04338</id>
    </interactant>
    <interactant intactId="EBI-16930">
        <id>Q01590</id>
        <label>SED5</label>
    </interactant>
    <organismsDiffer>false</organismsDiffer>
    <experiments>2</experiments>
</comment>
<comment type="interaction">
    <interactant intactId="EBI-20519">
        <id>Q04338</id>
    </interactant>
    <interactant intactId="EBI-38705">
        <id>Q03322</id>
        <label>TLG1</label>
    </interactant>
    <organismsDiffer>false</organismsDiffer>
    <experiments>8</experiments>
</comment>
<comment type="interaction">
    <interactant intactId="EBI-20519">
        <id>Q04338</id>
    </interactant>
    <interactant intactId="EBI-19302">
        <id>Q08144</id>
        <label>TLG2</label>
    </interactant>
    <organismsDiffer>false</organismsDiffer>
    <experiments>6</experiments>
</comment>
<comment type="interaction">
    <interactant intactId="EBI-20519">
        <id>Q04338</id>
    </interactant>
    <interactant intactId="EBI-20227">
        <id>Q12241</id>
        <label>VAM3</label>
    </interactant>
    <organismsDiffer>false</organismsDiffer>
    <experiments>13</experiments>
</comment>
<comment type="interaction">
    <interactant intactId="EBI-20519">
        <id>Q04338</id>
    </interactant>
    <interactant intactId="EBI-26982">
        <id>P36015</id>
        <label>YKT6</label>
    </interactant>
    <organismsDiffer>false</organismsDiffer>
    <experiments>6</experiments>
</comment>
<comment type="subcellular location">
    <subcellularLocation>
        <location>Prevacuolar compartment membrane</location>
        <topology>Single-pass type IV membrane protein</topology>
    </subcellularLocation>
    <subcellularLocation>
        <location>Golgi apparatus membrane</location>
        <topology>Single-pass type IV membrane protein</topology>
    </subcellularLocation>
    <text>A small portion is localized in the Golgi apparatus, the majority is localized in the PVC.</text>
</comment>
<comment type="similarity">
    <text evidence="8">Belongs to the VTI1 family.</text>
</comment>
<accession>Q04338</accession>
<accession>D6W022</accession>
<keyword id="KW-0002">3D-structure</keyword>
<keyword id="KW-0007">Acetylation</keyword>
<keyword id="KW-0175">Coiled coil</keyword>
<keyword id="KW-0903">Direct protein sequencing</keyword>
<keyword id="KW-0333">Golgi apparatus</keyword>
<keyword id="KW-0472">Membrane</keyword>
<keyword id="KW-0597">Phosphoprotein</keyword>
<keyword id="KW-0653">Protein transport</keyword>
<keyword id="KW-1185">Reference proteome</keyword>
<keyword id="KW-0812">Transmembrane</keyword>
<keyword id="KW-1133">Transmembrane helix</keyword>
<keyword id="KW-0813">Transport</keyword>
<sequence>MSSLLISYESDFKTTLEQAKASLAEAPSQPLSQRNTTLKHVEQQQDELFDLLDQMDVEVNNSIGDASERATYKAKLREWKKTIQSDIKRPLQSLVDSGDRDRLFGDLNASNIDDDQRQQLLSNHAILQKSGDRLKDASRIANETEGIGSQIMMDLRSQRETLENARQTLFQADSYVDKSIKTLKTMTRRLVANKFISYAIIAVLILLILLVLFSKFK</sequence>
<feature type="initiator methionine" description="Removed" evidence="7">
    <location>
        <position position="1"/>
    </location>
</feature>
<feature type="chain" id="PRO_0000218232" description="t-SNARE VTI1">
    <location>
        <begin position="2"/>
        <end position="217"/>
    </location>
</feature>
<feature type="topological domain" description="Cytoplasmic" evidence="1">
    <location>
        <begin position="2"/>
        <end position="194"/>
    </location>
</feature>
<feature type="transmembrane region" description="Helical; Anchor for type IV membrane protein" evidence="1">
    <location>
        <begin position="195"/>
        <end position="215"/>
    </location>
</feature>
<feature type="topological domain" description="Vesicular" evidence="1">
    <location>
        <begin position="216"/>
        <end position="217"/>
    </location>
</feature>
<feature type="domain" description="t-SNARE coiled-coil homology" evidence="2">
    <location>
        <begin position="124"/>
        <end position="186"/>
    </location>
</feature>
<feature type="modified residue" description="N-acetylserine" evidence="7">
    <location>
        <position position="2"/>
    </location>
</feature>
<feature type="modified residue" description="Phosphoserine" evidence="9 10">
    <location>
        <position position="110"/>
    </location>
</feature>
<feature type="modified residue" description="Phosphoserine" evidence="9">
    <location>
        <position position="149"/>
    </location>
</feature>
<feature type="mutagenesis site" description="In VTI1-2; exhibits defects in TGN to PVC transport at nonpermissive temperature; when associated with T-151." evidence="6">
    <original>S</original>
    <variation>P</variation>
    <location>
        <position position="130"/>
    </location>
</feature>
<feature type="mutagenesis site" description="In VTI1-12; blocks constitutively the traffic from the late Golgi to the vacuole and blocks the transport to the cis-Golgi compartment at nonpermissive temperature; when associated with R-158." evidence="6">
    <original>A</original>
    <variation>S</variation>
    <location>
        <position position="141"/>
    </location>
</feature>
<feature type="mutagenesis site" description="In VTI1-11; displays a block in traffic to the PVC and an additional defect in retrograde traffic to the cis-Golgi; when associated with F-155." evidence="6">
    <original>E</original>
    <variation>G</variation>
    <location>
        <position position="145"/>
    </location>
</feature>
<feature type="mutagenesis site" description="In VTI1-1; exhibits defects in TGN to PVC transport at nonpermissive temperature; when associated with R-148." evidence="6">
    <original>E</original>
    <variation>K</variation>
    <location>
        <position position="145"/>
    </location>
</feature>
<feature type="mutagenesis site" description="In VTI1-1; exhibits defects in TGN to PVC transport at nonpermissive temperature; when associated with K-145." evidence="6">
    <original>G</original>
    <variation>R</variation>
    <location>
        <position position="148"/>
    </location>
</feature>
<feature type="mutagenesis site" description="In VTI1-2; exhibits defects in TGN to PVC transport at nonpermissive temperature; when associated with P-130." evidence="6">
    <original>I</original>
    <variation>T</variation>
    <location>
        <position position="151"/>
    </location>
</feature>
<feature type="mutagenesis site" description="In VTI1-11; displays a block in traffic to the PVC and an additional defect in retrograde traffic to the cis-Golgi; when associated with G-145." evidence="6">
    <original>L</original>
    <variation>F</variation>
    <location>
        <position position="155"/>
    </location>
</feature>
<feature type="mutagenesis site" description="In VTI1-12; blocks constitutively the traffic from the late Golgi to the vacuole and blocks the transport to the cis-Golgi compartment at nonpermissive temperature; when associated with S-141." evidence="6">
    <original>Q</original>
    <variation>R</variation>
    <location>
        <position position="158"/>
    </location>
</feature>
<feature type="helix" evidence="11">
    <location>
        <begin position="4"/>
        <end position="25"/>
    </location>
</feature>
<feature type="helix" evidence="11">
    <location>
        <begin position="26"/>
        <end position="28"/>
    </location>
</feature>
<feature type="helix" evidence="11">
    <location>
        <begin position="31"/>
        <end position="62"/>
    </location>
</feature>
<feature type="helix" evidence="11">
    <location>
        <begin position="66"/>
        <end position="86"/>
    </location>
</feature>
<feature type="helix" evidence="11">
    <location>
        <begin position="88"/>
        <end position="96"/>
    </location>
</feature>
<gene>
    <name type="primary">VTI1</name>
    <name type="ordered locus">YMR197C</name>
    <name type="ORF">YM9646.10C</name>
</gene>
<protein>
    <recommendedName>
        <fullName>t-SNARE VTI1</fullName>
    </recommendedName>
    <alternativeName>
        <fullName>Qb-SNARE VTI1</fullName>
    </alternativeName>
    <alternativeName>
        <fullName>VPS10-interacting protein 1</fullName>
    </alternativeName>
    <alternativeName>
        <fullName>Vesicle transport v-SNARE protein VTI1</fullName>
    </alternativeName>
</protein>
<organism>
    <name type="scientific">Saccharomyces cerevisiae (strain ATCC 204508 / S288c)</name>
    <name type="common">Baker's yeast</name>
    <dbReference type="NCBI Taxonomy" id="559292"/>
    <lineage>
        <taxon>Eukaryota</taxon>
        <taxon>Fungi</taxon>
        <taxon>Dikarya</taxon>
        <taxon>Ascomycota</taxon>
        <taxon>Saccharomycotina</taxon>
        <taxon>Saccharomycetes</taxon>
        <taxon>Saccharomycetales</taxon>
        <taxon>Saccharomycetaceae</taxon>
        <taxon>Saccharomyces</taxon>
    </lineage>
</organism>
<reference key="1">
    <citation type="journal article" date="1997" name="J. Cell Biol.">
        <title>The yeast v-SNARE Vti1p mediates two vesicle transport pathways through interactions with the t-SNAREs Sed5p and Pep12p.</title>
        <authorList>
            <person name="Fischer von Mollard G."/>
            <person name="Nothwehr S.F."/>
            <person name="Stevens T.H."/>
        </authorList>
    </citation>
    <scope>NUCLEOTIDE SEQUENCE [MRNA]</scope>
    <scope>INTERACTION WITH SED5 AND PEP12</scope>
</reference>
<reference key="2">
    <citation type="journal article" date="1997" name="Nature">
        <title>The nucleotide sequence of Saccharomyces cerevisiae chromosome XIII.</title>
        <authorList>
            <person name="Bowman S."/>
            <person name="Churcher C.M."/>
            <person name="Badcock K."/>
            <person name="Brown D."/>
            <person name="Chillingworth T."/>
            <person name="Connor R."/>
            <person name="Dedman K."/>
            <person name="Devlin K."/>
            <person name="Gentles S."/>
            <person name="Hamlin N."/>
            <person name="Hunt S."/>
            <person name="Jagels K."/>
            <person name="Lye G."/>
            <person name="Moule S."/>
            <person name="Odell C."/>
            <person name="Pearson D."/>
            <person name="Rajandream M.A."/>
            <person name="Rice P."/>
            <person name="Skelton J."/>
            <person name="Walsh S.V."/>
            <person name="Whitehead S."/>
            <person name="Barrell B.G."/>
        </authorList>
    </citation>
    <scope>NUCLEOTIDE SEQUENCE [LARGE SCALE GENOMIC DNA]</scope>
    <source>
        <strain>ATCC 204508 / S288c</strain>
    </source>
</reference>
<reference key="3">
    <citation type="journal article" date="2014" name="G3 (Bethesda)">
        <title>The reference genome sequence of Saccharomyces cerevisiae: Then and now.</title>
        <authorList>
            <person name="Engel S.R."/>
            <person name="Dietrich F.S."/>
            <person name="Fisk D.G."/>
            <person name="Binkley G."/>
            <person name="Balakrishnan R."/>
            <person name="Costanzo M.C."/>
            <person name="Dwight S.S."/>
            <person name="Hitz B.C."/>
            <person name="Karra K."/>
            <person name="Nash R.S."/>
            <person name="Weng S."/>
            <person name="Wong E.D."/>
            <person name="Lloyd P."/>
            <person name="Skrzypek M.S."/>
            <person name="Miyasato S.R."/>
            <person name="Simison M."/>
            <person name="Cherry J.M."/>
        </authorList>
    </citation>
    <scope>GENOME REANNOTATION</scope>
    <source>
        <strain>ATCC 204508 / S288c</strain>
    </source>
</reference>
<reference key="4">
    <citation type="submission" date="2005-10" db="UniProtKB">
        <authorList>
            <person name="Bienvenut W.V."/>
            <person name="Peters C."/>
        </authorList>
    </citation>
    <scope>PROTEIN SEQUENCE OF 2-13; 21-34; 82-129; 140-156 AND 167-181</scope>
    <scope>CLEAVAGE OF INITIATOR METHIONINE</scope>
    <scope>ACETYLATION AT SER-2</scope>
    <scope>IDENTIFICATION BY MASS SPECTROMETRY</scope>
</reference>
<reference key="5">
    <citation type="journal article" date="1997" name="Mol. Biol. Cell">
        <title>Characterization of a novel yeast SNARE protein implicated in Golgi retrograde traffic.</title>
        <authorList>
            <person name="Lupashin V.V."/>
            <person name="Pokrovskaya I.D."/>
            <person name="McNew J.A."/>
            <person name="Waters M.G."/>
        </authorList>
    </citation>
    <scope>CHARACTERIZATION</scope>
</reference>
<reference key="6">
    <citation type="journal article" date="1998" name="EMBO J.">
        <title>Two syntaxin homologues in the TGN/endosomal system of yeast.</title>
        <authorList>
            <person name="Holthuis J.C.M."/>
            <person name="Nichols B.J."/>
            <person name="Dhruvakumar S."/>
            <person name="Pelham H.R.B."/>
        </authorList>
    </citation>
    <scope>INTERACTION WITH TLG1 AND TLG2</scope>
</reference>
<reference key="7">
    <citation type="journal article" date="1998" name="J. Biol. Chem.">
        <title>A human homolog can functionally replace the yeast vesicle-associated SNARE Vti1p in two vesicle transport pathways.</title>
        <authorList>
            <person name="Fischer von Mollard G."/>
            <person name="Stevens T.H."/>
        </authorList>
    </citation>
    <scope>MUTAGENESIS OF SER-130; ALA-141; GLU-145; GLY-148; ILE-151; LEU-155 AND GLN-158</scope>
</reference>
<reference key="8">
    <citation type="journal article" date="1999" name="J. Cell Biol.">
        <title>Three v-SNAREs and two t-SNAREs, present in a pentameric cis-SNARE complex on isolated vacuoles, are essential for homotypic fusion.</title>
        <authorList>
            <person name="Ungermann C."/>
            <person name="Fischer von Mollard G."/>
            <person name="Jensen O.N."/>
            <person name="Margolis N."/>
            <person name="Stevens T.H."/>
            <person name="Wickner W.T."/>
        </authorList>
    </citation>
    <scope>FUNCTION IN HOMOTYPIC VACUOLE FUSION</scope>
    <scope>SUBUNIT</scope>
</reference>
<reference key="9">
    <citation type="journal article" date="1999" name="Mol. Biol. Cell">
        <title>The Saccharomyces cerevisiae v-SNARE Vti1p is required for multiple membrane transport pathways to the vacuole.</title>
        <authorList>
            <person name="Fischer von Mollard G."/>
            <person name="Stevens T.H."/>
        </authorList>
    </citation>
    <scope>INVOLVEMENT IN MULTIPLE TRAFFICKING STEPS</scope>
</reference>
<reference key="10">
    <citation type="journal article" date="2001" name="J. Cell Biol.">
        <title>A t-SNARE of the endocytic pathway must be activated for fusion.</title>
        <authorList>
            <person name="Paumet F."/>
            <person name="Brugger B."/>
            <person name="Parlati F."/>
            <person name="McNew J.A."/>
            <person name="Sollner T.H."/>
            <person name="Rothman J.E."/>
        </authorList>
    </citation>
    <scope>FUNCTION</scope>
    <scope>INTERACTION WITH SNC2; TLG1 AND TLG2</scope>
</reference>
<reference key="11">
    <citation type="journal article" date="2002" name="Traffic">
        <title>A new yeast endosomal SNARE related to mammalian syntaxin 8.</title>
        <authorList>
            <person name="Lewis M.J."/>
            <person name="Pelham H.R.B."/>
        </authorList>
    </citation>
    <scope>INTERACTION WITH SYN8</scope>
</reference>
<reference key="12">
    <citation type="journal article" date="2004" name="Proc. Natl. Acad. Sci. U.S.A.">
        <title>The specificity of SNARE-dependent fusion is encoded in the SNARE motif.</title>
        <authorList>
            <person name="Paumet F."/>
            <person name="Rahimian V."/>
            <person name="Rothman J.E."/>
        </authorList>
    </citation>
    <scope>FUNCTION</scope>
</reference>
<reference key="13">
    <citation type="journal article" date="2008" name="Mol. Cell. Proteomics">
        <title>A multidimensional chromatography technology for in-depth phosphoproteome analysis.</title>
        <authorList>
            <person name="Albuquerque C.P."/>
            <person name="Smolka M.B."/>
            <person name="Payne S.H."/>
            <person name="Bafna V."/>
            <person name="Eng J."/>
            <person name="Zhou H."/>
        </authorList>
    </citation>
    <scope>PHOSPHORYLATION [LARGE SCALE ANALYSIS] AT SER-110 AND SER-149</scope>
    <scope>IDENTIFICATION BY MASS SPECTROMETRY [LARGE SCALE ANALYSIS]</scope>
</reference>
<reference key="14">
    <citation type="journal article" date="2009" name="Science">
        <title>Global analysis of Cdk1 substrate phosphorylation sites provides insights into evolution.</title>
        <authorList>
            <person name="Holt L.J."/>
            <person name="Tuch B.B."/>
            <person name="Villen J."/>
            <person name="Johnson A.D."/>
            <person name="Gygi S.P."/>
            <person name="Morgan D.O."/>
        </authorList>
    </citation>
    <scope>PHOSPHORYLATION [LARGE SCALE ANALYSIS] AT SER-110</scope>
    <scope>IDENTIFICATION BY MASS SPECTROMETRY [LARGE SCALE ANALYSIS]</scope>
</reference>